<reference key="1">
    <citation type="journal article" date="2002" name="Proc. Natl. Acad. Sci. U.S.A.">
        <title>Extensive mosaic structure revealed by the complete genome sequence of uropathogenic Escherichia coli.</title>
        <authorList>
            <person name="Welch R.A."/>
            <person name="Burland V."/>
            <person name="Plunkett G. III"/>
            <person name="Redford P."/>
            <person name="Roesch P."/>
            <person name="Rasko D."/>
            <person name="Buckles E.L."/>
            <person name="Liou S.-R."/>
            <person name="Boutin A."/>
            <person name="Hackett J."/>
            <person name="Stroud D."/>
            <person name="Mayhew G.F."/>
            <person name="Rose D.J."/>
            <person name="Zhou S."/>
            <person name="Schwartz D.C."/>
            <person name="Perna N.T."/>
            <person name="Mobley H.L.T."/>
            <person name="Donnenberg M.S."/>
            <person name="Blattner F.R."/>
        </authorList>
    </citation>
    <scope>NUCLEOTIDE SEQUENCE [LARGE SCALE GENOMIC DNA]</scope>
    <source>
        <strain>CFT073 / ATCC 700928 / UPEC</strain>
    </source>
</reference>
<proteinExistence type="inferred from homology"/>
<organism>
    <name type="scientific">Escherichia coli O6:H1 (strain CFT073 / ATCC 700928 / UPEC)</name>
    <dbReference type="NCBI Taxonomy" id="199310"/>
    <lineage>
        <taxon>Bacteria</taxon>
        <taxon>Pseudomonadati</taxon>
        <taxon>Pseudomonadota</taxon>
        <taxon>Gammaproteobacteria</taxon>
        <taxon>Enterobacterales</taxon>
        <taxon>Enterobacteriaceae</taxon>
        <taxon>Escherichia</taxon>
    </lineage>
</organism>
<feature type="chain" id="PRO_0000188964" description="Transcription termination factor Rho">
    <location>
        <begin position="1"/>
        <end position="419"/>
    </location>
</feature>
<feature type="domain" description="Rho RNA-BD" evidence="2">
    <location>
        <begin position="48"/>
        <end position="123"/>
    </location>
</feature>
<feature type="region of interest" description="RNA-binding 1" evidence="1">
    <location>
        <begin position="61"/>
        <end position="66"/>
    </location>
</feature>
<feature type="region of interest" description="RNA-binding 1" evidence="1">
    <location>
        <begin position="78"/>
        <end position="80"/>
    </location>
</feature>
<feature type="region of interest" description="RNA-binding 1" evidence="1">
    <location>
        <begin position="108"/>
        <end position="110"/>
    </location>
</feature>
<feature type="region of interest" description="RNA-binding 2" evidence="1">
    <location>
        <begin position="284"/>
        <end position="288"/>
    </location>
</feature>
<feature type="binding site" evidence="1">
    <location>
        <begin position="169"/>
        <end position="174"/>
    </location>
    <ligand>
        <name>ATP</name>
        <dbReference type="ChEBI" id="CHEBI:30616"/>
    </ligand>
</feature>
<feature type="binding site" evidence="1">
    <location>
        <begin position="181"/>
        <end position="186"/>
    </location>
    <ligand>
        <name>ATP</name>
        <dbReference type="ChEBI" id="CHEBI:30616"/>
    </ligand>
</feature>
<feature type="binding site" evidence="1">
    <location>
        <position position="212"/>
    </location>
    <ligand>
        <name>ATP</name>
        <dbReference type="ChEBI" id="CHEBI:30616"/>
    </ligand>
</feature>
<feature type="site" description="RNA-binding 2" evidence="1">
    <location>
        <position position="326"/>
    </location>
</feature>
<evidence type="ECO:0000255" key="1">
    <source>
        <dbReference type="HAMAP-Rule" id="MF_01884"/>
    </source>
</evidence>
<evidence type="ECO:0000255" key="2">
    <source>
        <dbReference type="PROSITE-ProRule" id="PRU01203"/>
    </source>
</evidence>
<evidence type="ECO:0000305" key="3"/>
<dbReference type="EC" id="3.6.4.-" evidence="1"/>
<dbReference type="EMBL" id="AE014075">
    <property type="protein sequence ID" value="AAN83135.1"/>
    <property type="status" value="ALT_INIT"/>
    <property type="molecule type" value="Genomic_DNA"/>
</dbReference>
<dbReference type="RefSeq" id="WP_001054527.1">
    <property type="nucleotide sequence ID" value="NZ_CP051263.1"/>
</dbReference>
<dbReference type="SMR" id="P0AG31"/>
<dbReference type="STRING" id="199310.c4702"/>
<dbReference type="GeneID" id="93778161"/>
<dbReference type="KEGG" id="ecc:c4702"/>
<dbReference type="eggNOG" id="COG1158">
    <property type="taxonomic scope" value="Bacteria"/>
</dbReference>
<dbReference type="HOGENOM" id="CLU_016377_4_3_6"/>
<dbReference type="Proteomes" id="UP000001410">
    <property type="component" value="Chromosome"/>
</dbReference>
<dbReference type="GO" id="GO:0005829">
    <property type="term" value="C:cytosol"/>
    <property type="evidence" value="ECO:0007669"/>
    <property type="project" value="UniProtKB-ARBA"/>
</dbReference>
<dbReference type="GO" id="GO:0005524">
    <property type="term" value="F:ATP binding"/>
    <property type="evidence" value="ECO:0007669"/>
    <property type="project" value="UniProtKB-UniRule"/>
</dbReference>
<dbReference type="GO" id="GO:0016887">
    <property type="term" value="F:ATP hydrolysis activity"/>
    <property type="evidence" value="ECO:0007669"/>
    <property type="project" value="InterPro"/>
</dbReference>
<dbReference type="GO" id="GO:0008186">
    <property type="term" value="F:ATP-dependent activity, acting on RNA"/>
    <property type="evidence" value="ECO:0007669"/>
    <property type="project" value="InterPro"/>
</dbReference>
<dbReference type="GO" id="GO:0004386">
    <property type="term" value="F:helicase activity"/>
    <property type="evidence" value="ECO:0007669"/>
    <property type="project" value="UniProtKB-UniRule"/>
</dbReference>
<dbReference type="GO" id="GO:0003723">
    <property type="term" value="F:RNA binding"/>
    <property type="evidence" value="ECO:0007669"/>
    <property type="project" value="UniProtKB-UniRule"/>
</dbReference>
<dbReference type="GO" id="GO:0006353">
    <property type="term" value="P:DNA-templated transcription termination"/>
    <property type="evidence" value="ECO:0007669"/>
    <property type="project" value="UniProtKB-UniRule"/>
</dbReference>
<dbReference type="CDD" id="cd04459">
    <property type="entry name" value="Rho_CSD"/>
    <property type="match status" value="1"/>
</dbReference>
<dbReference type="CDD" id="cd01128">
    <property type="entry name" value="rho_factor_C"/>
    <property type="match status" value="1"/>
</dbReference>
<dbReference type="FunFam" id="1.10.720.10:FF:000001">
    <property type="entry name" value="Transcription termination factor Rho"/>
    <property type="match status" value="1"/>
</dbReference>
<dbReference type="FunFam" id="2.40.50.140:FF:000010">
    <property type="entry name" value="Transcription termination factor Rho"/>
    <property type="match status" value="1"/>
</dbReference>
<dbReference type="FunFam" id="3.40.50.300:FF:000072">
    <property type="entry name" value="Transcription termination factor Rho"/>
    <property type="match status" value="1"/>
</dbReference>
<dbReference type="Gene3D" id="1.10.720.10">
    <property type="match status" value="1"/>
</dbReference>
<dbReference type="Gene3D" id="2.40.50.140">
    <property type="entry name" value="Nucleic acid-binding proteins"/>
    <property type="match status" value="1"/>
</dbReference>
<dbReference type="Gene3D" id="3.40.50.300">
    <property type="entry name" value="P-loop containing nucleotide triphosphate hydrolases"/>
    <property type="match status" value="1"/>
</dbReference>
<dbReference type="HAMAP" id="MF_01884">
    <property type="entry name" value="Rho"/>
    <property type="match status" value="1"/>
</dbReference>
<dbReference type="InterPro" id="IPR003593">
    <property type="entry name" value="AAA+_ATPase"/>
</dbReference>
<dbReference type="InterPro" id="IPR000194">
    <property type="entry name" value="ATPase_F1/V1/A1_a/bsu_nucl-bd"/>
</dbReference>
<dbReference type="InterPro" id="IPR011129">
    <property type="entry name" value="CSD"/>
</dbReference>
<dbReference type="InterPro" id="IPR012340">
    <property type="entry name" value="NA-bd_OB-fold"/>
</dbReference>
<dbReference type="InterPro" id="IPR027417">
    <property type="entry name" value="P-loop_NTPase"/>
</dbReference>
<dbReference type="InterPro" id="IPR011112">
    <property type="entry name" value="Rho-like_N"/>
</dbReference>
<dbReference type="InterPro" id="IPR041703">
    <property type="entry name" value="Rho_factor_ATP-bd"/>
</dbReference>
<dbReference type="InterPro" id="IPR036269">
    <property type="entry name" value="Rho_N_sf"/>
</dbReference>
<dbReference type="InterPro" id="IPR011113">
    <property type="entry name" value="Rho_RNA-bd"/>
</dbReference>
<dbReference type="InterPro" id="IPR004665">
    <property type="entry name" value="Term_rho"/>
</dbReference>
<dbReference type="NCBIfam" id="NF006886">
    <property type="entry name" value="PRK09376.1"/>
    <property type="match status" value="1"/>
</dbReference>
<dbReference type="NCBIfam" id="TIGR00767">
    <property type="entry name" value="rho"/>
    <property type="match status" value="1"/>
</dbReference>
<dbReference type="PANTHER" id="PTHR46425">
    <property type="entry name" value="TRANSCRIPTION TERMINATION FACTOR RHO"/>
    <property type="match status" value="1"/>
</dbReference>
<dbReference type="PANTHER" id="PTHR46425:SF1">
    <property type="entry name" value="TRANSCRIPTION TERMINATION FACTOR RHO"/>
    <property type="match status" value="1"/>
</dbReference>
<dbReference type="Pfam" id="PF00006">
    <property type="entry name" value="ATP-synt_ab"/>
    <property type="match status" value="1"/>
</dbReference>
<dbReference type="Pfam" id="PF07498">
    <property type="entry name" value="Rho_N"/>
    <property type="match status" value="1"/>
</dbReference>
<dbReference type="Pfam" id="PF07497">
    <property type="entry name" value="Rho_RNA_bind"/>
    <property type="match status" value="1"/>
</dbReference>
<dbReference type="SMART" id="SM00382">
    <property type="entry name" value="AAA"/>
    <property type="match status" value="1"/>
</dbReference>
<dbReference type="SMART" id="SM00357">
    <property type="entry name" value="CSP"/>
    <property type="match status" value="1"/>
</dbReference>
<dbReference type="SMART" id="SM00959">
    <property type="entry name" value="Rho_N"/>
    <property type="match status" value="1"/>
</dbReference>
<dbReference type="SUPFAM" id="SSF50249">
    <property type="entry name" value="Nucleic acid-binding proteins"/>
    <property type="match status" value="1"/>
</dbReference>
<dbReference type="SUPFAM" id="SSF52540">
    <property type="entry name" value="P-loop containing nucleoside triphosphate hydrolases"/>
    <property type="match status" value="1"/>
</dbReference>
<dbReference type="SUPFAM" id="SSF68912">
    <property type="entry name" value="Rho N-terminal domain-like"/>
    <property type="match status" value="1"/>
</dbReference>
<dbReference type="PROSITE" id="PS51856">
    <property type="entry name" value="RHO_RNA_BD"/>
    <property type="match status" value="1"/>
</dbReference>
<name>RHO_ECOL6</name>
<comment type="function">
    <text evidence="1">Facilitates transcription termination by a mechanism that involves Rho binding to the nascent RNA, activation of Rho's RNA-dependent ATPase activity, and release of the mRNA from the DNA template.</text>
</comment>
<comment type="subunit">
    <text evidence="1">Homohexamer. The homohexamer assembles into an open ring structure.</text>
</comment>
<comment type="similarity">
    <text evidence="1">Belongs to the Rho family.</text>
</comment>
<comment type="sequence caution" evidence="3">
    <conflict type="erroneous initiation">
        <sequence resource="EMBL-CDS" id="AAN83135"/>
    </conflict>
    <text>Extended N-terminus.</text>
</comment>
<protein>
    <recommendedName>
        <fullName evidence="1">Transcription termination factor Rho</fullName>
        <ecNumber evidence="1">3.6.4.-</ecNumber>
    </recommendedName>
    <alternativeName>
        <fullName evidence="1">ATP-dependent helicase Rho</fullName>
    </alternativeName>
</protein>
<gene>
    <name evidence="1" type="primary">rho</name>
    <name type="ordered locus">c4702</name>
</gene>
<keyword id="KW-0067">ATP-binding</keyword>
<keyword id="KW-0347">Helicase</keyword>
<keyword id="KW-0378">Hydrolase</keyword>
<keyword id="KW-0547">Nucleotide-binding</keyword>
<keyword id="KW-1185">Reference proteome</keyword>
<keyword id="KW-0694">RNA-binding</keyword>
<keyword id="KW-0804">Transcription</keyword>
<keyword id="KW-0805">Transcription regulation</keyword>
<keyword id="KW-0806">Transcription termination</keyword>
<sequence length="419" mass="47004">MNLTELKNTPVSELITLGENMGLENLARMRKQDIIFAILKQHAKSGEDIFGDGVLEILQDGFGFLRSADSSYLAGPDDIYVSPSQIRRFNLRTGDTISGKIRPPKEGERYFALLKVNEVNFDKPENARNKILFENLTPLHANSRLRMERGNGSTEDLTARVLDLASPIGRGQRGLIVAPPKAGKTMLLQNIAQSIAYNHPDCVLMVLLIDERPEEVTEMQRLVKGEVVASTFDEPASRHVQVAEMVIEKAKRLVEHKKDVIILLDSITRLARAYNTVVPASGKVLTGGVDANALHRPKRFFGAARNVEEGGSLTIIATALIDTGSKMDEVIYEEFKGTGNMELHLSRKIAEKRVFPAIDYNRSGTRKEELLTTQEELQKMWILRKIIHPMGEIDAMEFLINKLAMTKTNDDFFEMMKRS</sequence>
<accession>P0AG31</accession>
<accession>P03002</accession>
<accession>Q48357</accession>